<accession>P26161</accession>
<proteinExistence type="predicted"/>
<feature type="chain" id="PRO_0000066423" description="Uncharacterized 23.7 kDa protein in puhA 5'region">
    <location>
        <begin position="1"/>
        <end position="214"/>
    </location>
</feature>
<name>YPU5_RHOCA</name>
<organism>
    <name type="scientific">Rhodobacter capsulatus</name>
    <name type="common">Rhodopseudomonas capsulata</name>
    <dbReference type="NCBI Taxonomy" id="1061"/>
    <lineage>
        <taxon>Bacteria</taxon>
        <taxon>Pseudomonadati</taxon>
        <taxon>Pseudomonadota</taxon>
        <taxon>Alphaproteobacteria</taxon>
        <taxon>Rhodobacterales</taxon>
        <taxon>Rhodobacter group</taxon>
        <taxon>Rhodobacter</taxon>
    </lineage>
</organism>
<protein>
    <recommendedName>
        <fullName>Uncharacterized 23.7 kDa protein in puhA 5'region</fullName>
    </recommendedName>
    <alternativeName>
        <fullName>ORF214</fullName>
    </alternativeName>
    <alternativeName>
        <fullName>Protein F3981</fullName>
    </alternativeName>
</protein>
<sequence length="214" mass="23658">MSDHDFDFEPQPGIPAPLPEGEEILWQGKPDMWMLARDAFKIRWMTGIMLFVAAWRTALYWHEEGARVALPTAAVLFLLMAAVVYGLMLLLAFAQARAAIYTITSARVILRIGAALQVTFTIPFTVIESMSLAKLGRKGFGTIALQNRSDMRLSYGVLWPHARPWHFRVPQAAFRCIPEAEKVARILSEAAQAKLNEPQVVAAPKAGAALAVAE</sequence>
<reference key="1">
    <citation type="submission" date="1991-11" db="EMBL/GenBank/DDBJ databases">
        <authorList>
            <person name="Burke D.H."/>
            <person name="Alberti M."/>
            <person name="Armstrong G.A."/>
            <person name="Hearst J.E."/>
        </authorList>
    </citation>
    <scope>NUCLEOTIDE SEQUENCE [GENOMIC DNA]</scope>
</reference>
<reference key="2">
    <citation type="journal article" date="1984" name="Cell">
        <title>Nucleotide and deduced polypeptide sequences of the photosynthetic reaction-center, B870 antenna, and flanking polypeptides from R. capsulata.</title>
        <authorList>
            <person name="Youvan D.C."/>
            <person name="Bylina E.J."/>
            <person name="Alberti M."/>
            <person name="Begusch H."/>
            <person name="Hearst J.E."/>
        </authorList>
    </citation>
    <scope>NUCLEOTIDE SEQUENCE [GENOMIC DNA] OF 1-14</scope>
</reference>
<dbReference type="EMBL" id="Z11165">
    <property type="protein sequence ID" value="CAA77519.1"/>
    <property type="molecule type" value="Genomic_DNA"/>
</dbReference>
<dbReference type="EMBL" id="K01183">
    <property type="status" value="NOT_ANNOTATED_CDS"/>
    <property type="molecule type" value="Genomic_DNA"/>
</dbReference>
<dbReference type="PIR" id="S17807">
    <property type="entry name" value="S17807"/>
</dbReference>
<dbReference type="InterPro" id="IPR054839">
    <property type="entry name" value="puhB_PGC"/>
</dbReference>
<dbReference type="InterPro" id="IPR005182">
    <property type="entry name" value="YdbS-like_PH"/>
</dbReference>
<dbReference type="NCBIfam" id="NF040894">
    <property type="entry name" value="puhB_PGC"/>
    <property type="match status" value="1"/>
</dbReference>
<dbReference type="Pfam" id="PF03703">
    <property type="entry name" value="bPH_2"/>
    <property type="match status" value="1"/>
</dbReference>